<proteinExistence type="inferred from homology"/>
<sequence length="292" mass="32555">MKILVPATSANLGPGFDCLGLSLKLFNETQIQKSGVFSISIGGEGSDNIFLKKNNIFVNIFYEIYEKLSGKKDNFRFIFQNNIPLSRGLGSSSAVIVGAIASAYYMSGFKVEKERILDEALIYENHPDNIAPATLGGFVCSLVEKNKVYSIKKEIDKDLAAVVVIPNLAMSTEQSRQALAKNLSFNDAVFNLSHASFLTACFLEKKYEFLKFASQDKLHEINRMKNLPELFEVQKFALENKALMSTLSGSGSSFFSLAFKDDALALAKKIQTKFKDFRVQYLEFDDNGFEIC</sequence>
<organism>
    <name type="scientific">Campylobacter jejuni (strain RM1221)</name>
    <dbReference type="NCBI Taxonomy" id="195099"/>
    <lineage>
        <taxon>Bacteria</taxon>
        <taxon>Pseudomonadati</taxon>
        <taxon>Campylobacterota</taxon>
        <taxon>Epsilonproteobacteria</taxon>
        <taxon>Campylobacterales</taxon>
        <taxon>Campylobacteraceae</taxon>
        <taxon>Campylobacter</taxon>
    </lineage>
</organism>
<reference key="1">
    <citation type="journal article" date="2005" name="PLoS Biol.">
        <title>Major structural differences and novel potential virulence mechanisms from the genomes of multiple Campylobacter species.</title>
        <authorList>
            <person name="Fouts D.E."/>
            <person name="Mongodin E.F."/>
            <person name="Mandrell R.E."/>
            <person name="Miller W.G."/>
            <person name="Rasko D.A."/>
            <person name="Ravel J."/>
            <person name="Brinkac L.M."/>
            <person name="DeBoy R.T."/>
            <person name="Parker C.T."/>
            <person name="Daugherty S.C."/>
            <person name="Dodson R.J."/>
            <person name="Durkin A.S."/>
            <person name="Madupu R."/>
            <person name="Sullivan S.A."/>
            <person name="Shetty J.U."/>
            <person name="Ayodeji M.A."/>
            <person name="Shvartsbeyn A."/>
            <person name="Schatz M.C."/>
            <person name="Badger J.H."/>
            <person name="Fraser C.M."/>
            <person name="Nelson K.E."/>
        </authorList>
    </citation>
    <scope>NUCLEOTIDE SEQUENCE [LARGE SCALE GENOMIC DNA]</scope>
    <source>
        <strain>RM1221</strain>
    </source>
</reference>
<evidence type="ECO:0000255" key="1">
    <source>
        <dbReference type="HAMAP-Rule" id="MF_00384"/>
    </source>
</evidence>
<dbReference type="EC" id="2.7.1.39" evidence="1"/>
<dbReference type="EMBL" id="CP000025">
    <property type="protein sequence ID" value="AAW34724.1"/>
    <property type="molecule type" value="Genomic_DNA"/>
</dbReference>
<dbReference type="RefSeq" id="WP_002851909.1">
    <property type="nucleotide sequence ID" value="NC_003912.7"/>
</dbReference>
<dbReference type="SMR" id="Q5HX32"/>
<dbReference type="KEGG" id="cjr:CJE0129"/>
<dbReference type="HOGENOM" id="CLU_041243_0_0_7"/>
<dbReference type="UniPathway" id="UPA00050">
    <property type="reaction ID" value="UER00064"/>
</dbReference>
<dbReference type="GO" id="GO:0005737">
    <property type="term" value="C:cytoplasm"/>
    <property type="evidence" value="ECO:0007669"/>
    <property type="project" value="UniProtKB-SubCell"/>
</dbReference>
<dbReference type="GO" id="GO:0005524">
    <property type="term" value="F:ATP binding"/>
    <property type="evidence" value="ECO:0007669"/>
    <property type="project" value="UniProtKB-UniRule"/>
</dbReference>
<dbReference type="GO" id="GO:0004413">
    <property type="term" value="F:homoserine kinase activity"/>
    <property type="evidence" value="ECO:0007669"/>
    <property type="project" value="UniProtKB-UniRule"/>
</dbReference>
<dbReference type="GO" id="GO:0009088">
    <property type="term" value="P:threonine biosynthetic process"/>
    <property type="evidence" value="ECO:0007669"/>
    <property type="project" value="UniProtKB-UniRule"/>
</dbReference>
<dbReference type="Gene3D" id="3.30.230.10">
    <property type="match status" value="1"/>
</dbReference>
<dbReference type="Gene3D" id="3.30.70.890">
    <property type="entry name" value="GHMP kinase, C-terminal domain"/>
    <property type="match status" value="1"/>
</dbReference>
<dbReference type="HAMAP" id="MF_00384">
    <property type="entry name" value="Homoser_kinase"/>
    <property type="match status" value="1"/>
</dbReference>
<dbReference type="InterPro" id="IPR013750">
    <property type="entry name" value="GHMP_kinase_C_dom"/>
</dbReference>
<dbReference type="InterPro" id="IPR036554">
    <property type="entry name" value="GHMP_kinase_C_sf"/>
</dbReference>
<dbReference type="InterPro" id="IPR006204">
    <property type="entry name" value="GHMP_kinase_N_dom"/>
</dbReference>
<dbReference type="InterPro" id="IPR006203">
    <property type="entry name" value="GHMP_knse_ATP-bd_CS"/>
</dbReference>
<dbReference type="InterPro" id="IPR000870">
    <property type="entry name" value="Homoserine_kinase"/>
</dbReference>
<dbReference type="InterPro" id="IPR020568">
    <property type="entry name" value="Ribosomal_Su5_D2-typ_SF"/>
</dbReference>
<dbReference type="InterPro" id="IPR014721">
    <property type="entry name" value="Ribsml_uS5_D2-typ_fold_subgr"/>
</dbReference>
<dbReference type="NCBIfam" id="TIGR00191">
    <property type="entry name" value="thrB"/>
    <property type="match status" value="1"/>
</dbReference>
<dbReference type="PANTHER" id="PTHR20861:SF1">
    <property type="entry name" value="HOMOSERINE KINASE"/>
    <property type="match status" value="1"/>
</dbReference>
<dbReference type="PANTHER" id="PTHR20861">
    <property type="entry name" value="HOMOSERINE/4-DIPHOSPHOCYTIDYL-2-C-METHYL-D-ERYTHRITOL KINASE"/>
    <property type="match status" value="1"/>
</dbReference>
<dbReference type="Pfam" id="PF08544">
    <property type="entry name" value="GHMP_kinases_C"/>
    <property type="match status" value="1"/>
</dbReference>
<dbReference type="Pfam" id="PF00288">
    <property type="entry name" value="GHMP_kinases_N"/>
    <property type="match status" value="1"/>
</dbReference>
<dbReference type="PIRSF" id="PIRSF000676">
    <property type="entry name" value="Homoser_kin"/>
    <property type="match status" value="1"/>
</dbReference>
<dbReference type="PRINTS" id="PR00958">
    <property type="entry name" value="HOMSERKINASE"/>
</dbReference>
<dbReference type="SUPFAM" id="SSF55060">
    <property type="entry name" value="GHMP Kinase, C-terminal domain"/>
    <property type="match status" value="1"/>
</dbReference>
<dbReference type="SUPFAM" id="SSF54211">
    <property type="entry name" value="Ribosomal protein S5 domain 2-like"/>
    <property type="match status" value="1"/>
</dbReference>
<dbReference type="PROSITE" id="PS00627">
    <property type="entry name" value="GHMP_KINASES_ATP"/>
    <property type="match status" value="1"/>
</dbReference>
<accession>Q5HX32</accession>
<protein>
    <recommendedName>
        <fullName evidence="1">Homoserine kinase</fullName>
        <shortName evidence="1">HK</shortName>
        <shortName evidence="1">HSK</shortName>
        <ecNumber evidence="1">2.7.1.39</ecNumber>
    </recommendedName>
</protein>
<comment type="function">
    <text evidence="1">Catalyzes the ATP-dependent phosphorylation of L-homoserine to L-homoserine phosphate.</text>
</comment>
<comment type="catalytic activity">
    <reaction evidence="1">
        <text>L-homoserine + ATP = O-phospho-L-homoserine + ADP + H(+)</text>
        <dbReference type="Rhea" id="RHEA:13985"/>
        <dbReference type="ChEBI" id="CHEBI:15378"/>
        <dbReference type="ChEBI" id="CHEBI:30616"/>
        <dbReference type="ChEBI" id="CHEBI:57476"/>
        <dbReference type="ChEBI" id="CHEBI:57590"/>
        <dbReference type="ChEBI" id="CHEBI:456216"/>
        <dbReference type="EC" id="2.7.1.39"/>
    </reaction>
</comment>
<comment type="pathway">
    <text evidence="1">Amino-acid biosynthesis; L-threonine biosynthesis; L-threonine from L-aspartate: step 4/5.</text>
</comment>
<comment type="subcellular location">
    <subcellularLocation>
        <location evidence="1">Cytoplasm</location>
    </subcellularLocation>
</comment>
<comment type="similarity">
    <text evidence="1">Belongs to the GHMP kinase family. Homoserine kinase subfamily.</text>
</comment>
<gene>
    <name evidence="1" type="primary">thrB</name>
    <name type="ordered locus">CJE0129</name>
</gene>
<keyword id="KW-0028">Amino-acid biosynthesis</keyword>
<keyword id="KW-0067">ATP-binding</keyword>
<keyword id="KW-0963">Cytoplasm</keyword>
<keyword id="KW-0418">Kinase</keyword>
<keyword id="KW-0547">Nucleotide-binding</keyword>
<keyword id="KW-0791">Threonine biosynthesis</keyword>
<keyword id="KW-0808">Transferase</keyword>
<feature type="chain" id="PRO_1000049118" description="Homoserine kinase">
    <location>
        <begin position="1"/>
        <end position="292"/>
    </location>
</feature>
<feature type="binding site" evidence="1">
    <location>
        <begin position="84"/>
        <end position="94"/>
    </location>
    <ligand>
        <name>ATP</name>
        <dbReference type="ChEBI" id="CHEBI:30616"/>
    </ligand>
</feature>
<name>KHSE_CAMJR</name>